<accession>Q0STN4</accession>
<reference key="1">
    <citation type="journal article" date="2006" name="Genome Res.">
        <title>Skewed genomic variability in strains of the toxigenic bacterial pathogen, Clostridium perfringens.</title>
        <authorList>
            <person name="Myers G.S.A."/>
            <person name="Rasko D.A."/>
            <person name="Cheung J.K."/>
            <person name="Ravel J."/>
            <person name="Seshadri R."/>
            <person name="DeBoy R.T."/>
            <person name="Ren Q."/>
            <person name="Varga J."/>
            <person name="Awad M.M."/>
            <person name="Brinkac L.M."/>
            <person name="Daugherty S.C."/>
            <person name="Haft D.H."/>
            <person name="Dodson R.J."/>
            <person name="Madupu R."/>
            <person name="Nelson W.C."/>
            <person name="Rosovitz M.J."/>
            <person name="Sullivan S.A."/>
            <person name="Khouri H."/>
            <person name="Dimitrov G.I."/>
            <person name="Watkins K.L."/>
            <person name="Mulligan S."/>
            <person name="Benton J."/>
            <person name="Radune D."/>
            <person name="Fisher D.J."/>
            <person name="Atkins H.S."/>
            <person name="Hiscox T."/>
            <person name="Jost B.H."/>
            <person name="Billington S.J."/>
            <person name="Songer J.G."/>
            <person name="McClane B.A."/>
            <person name="Titball R.W."/>
            <person name="Rood J.I."/>
            <person name="Melville S.B."/>
            <person name="Paulsen I.T."/>
        </authorList>
    </citation>
    <scope>NUCLEOTIDE SEQUENCE [LARGE SCALE GENOMIC DNA]</scope>
    <source>
        <strain>SM101 / Type A</strain>
    </source>
</reference>
<sequence>MLKNKHLLDPSDFTIEEFDEIFKLAHQIMTNPKEYQNICNGKILATLFYEPSTRTRLSFESAMIRLGGQVIGFSEPNSSSVSKGESLRDTIKTVNCYADLIAMRHPLEGSAKVASMYSDIPVINAGDGGHQHPTQTLTDLLTIKEYKGNLEGNTIALCGDLKFGRTVHSLIKALSRYKNNKFILISPIELRIPNYIREQILEKNNIEYKEITSLEEGIKEADILYMTRIQRERFVDQSEYERLKDVYVLDEAKMKGAKEDMMVLHPLPRVNEIAYEVDEDSRAFYFKQAKCGMYVRMALMAKLLGEA</sequence>
<comment type="function">
    <text evidence="1">Catalyzes the condensation of carbamoyl phosphate and aspartate to form carbamoyl aspartate and inorganic phosphate, the committed step in the de novo pyrimidine nucleotide biosynthesis pathway.</text>
</comment>
<comment type="catalytic activity">
    <reaction evidence="1">
        <text>carbamoyl phosphate + L-aspartate = N-carbamoyl-L-aspartate + phosphate + H(+)</text>
        <dbReference type="Rhea" id="RHEA:20013"/>
        <dbReference type="ChEBI" id="CHEBI:15378"/>
        <dbReference type="ChEBI" id="CHEBI:29991"/>
        <dbReference type="ChEBI" id="CHEBI:32814"/>
        <dbReference type="ChEBI" id="CHEBI:43474"/>
        <dbReference type="ChEBI" id="CHEBI:58228"/>
        <dbReference type="EC" id="2.1.3.2"/>
    </reaction>
</comment>
<comment type="pathway">
    <text evidence="1">Pyrimidine metabolism; UMP biosynthesis via de novo pathway; (S)-dihydroorotate from bicarbonate: step 2/3.</text>
</comment>
<comment type="subunit">
    <text evidence="1">Heterododecamer (2C3:3R2) of six catalytic PyrB chains organized as two trimers (C3), and six regulatory PyrI chains organized as three dimers (R2).</text>
</comment>
<comment type="similarity">
    <text evidence="1">Belongs to the aspartate/ornithine carbamoyltransferase superfamily. ATCase family.</text>
</comment>
<feature type="chain" id="PRO_0000321094" description="Aspartate carbamoyltransferase catalytic subunit">
    <location>
        <begin position="1"/>
        <end position="307"/>
    </location>
</feature>
<feature type="binding site" evidence="1">
    <location>
        <position position="54"/>
    </location>
    <ligand>
        <name>carbamoyl phosphate</name>
        <dbReference type="ChEBI" id="CHEBI:58228"/>
    </ligand>
</feature>
<feature type="binding site" evidence="1">
    <location>
        <position position="55"/>
    </location>
    <ligand>
        <name>carbamoyl phosphate</name>
        <dbReference type="ChEBI" id="CHEBI:58228"/>
    </ligand>
</feature>
<feature type="binding site" evidence="1">
    <location>
        <position position="83"/>
    </location>
    <ligand>
        <name>L-aspartate</name>
        <dbReference type="ChEBI" id="CHEBI:29991"/>
    </ligand>
</feature>
<feature type="binding site" evidence="1">
    <location>
        <position position="104"/>
    </location>
    <ligand>
        <name>carbamoyl phosphate</name>
        <dbReference type="ChEBI" id="CHEBI:58228"/>
    </ligand>
</feature>
<feature type="binding site" evidence="1">
    <location>
        <position position="132"/>
    </location>
    <ligand>
        <name>carbamoyl phosphate</name>
        <dbReference type="ChEBI" id="CHEBI:58228"/>
    </ligand>
</feature>
<feature type="binding site" evidence="1">
    <location>
        <position position="135"/>
    </location>
    <ligand>
        <name>carbamoyl phosphate</name>
        <dbReference type="ChEBI" id="CHEBI:58228"/>
    </ligand>
</feature>
<feature type="binding site" evidence="1">
    <location>
        <position position="165"/>
    </location>
    <ligand>
        <name>L-aspartate</name>
        <dbReference type="ChEBI" id="CHEBI:29991"/>
    </ligand>
</feature>
<feature type="binding site" evidence="1">
    <location>
        <position position="228"/>
    </location>
    <ligand>
        <name>L-aspartate</name>
        <dbReference type="ChEBI" id="CHEBI:29991"/>
    </ligand>
</feature>
<feature type="binding site" evidence="1">
    <location>
        <position position="267"/>
    </location>
    <ligand>
        <name>carbamoyl phosphate</name>
        <dbReference type="ChEBI" id="CHEBI:58228"/>
    </ligand>
</feature>
<feature type="binding site" evidence="1">
    <location>
        <position position="268"/>
    </location>
    <ligand>
        <name>carbamoyl phosphate</name>
        <dbReference type="ChEBI" id="CHEBI:58228"/>
    </ligand>
</feature>
<protein>
    <recommendedName>
        <fullName evidence="1">Aspartate carbamoyltransferase catalytic subunit</fullName>
        <ecNumber evidence="1">2.1.3.2</ecNumber>
    </recommendedName>
    <alternativeName>
        <fullName evidence="1">Aspartate transcarbamylase</fullName>
        <shortName evidence="1">ATCase</shortName>
    </alternativeName>
</protein>
<gene>
    <name evidence="1" type="primary">pyrB</name>
    <name type="ordered locus">CPR_1201</name>
</gene>
<dbReference type="EC" id="2.1.3.2" evidence="1"/>
<dbReference type="EMBL" id="CP000312">
    <property type="protein sequence ID" value="ABG86470.1"/>
    <property type="molecule type" value="Genomic_DNA"/>
</dbReference>
<dbReference type="RefSeq" id="WP_011592198.1">
    <property type="nucleotide sequence ID" value="NC_008262.1"/>
</dbReference>
<dbReference type="SMR" id="Q0STN4"/>
<dbReference type="KEGG" id="cpr:CPR_1201"/>
<dbReference type="UniPathway" id="UPA00070">
    <property type="reaction ID" value="UER00116"/>
</dbReference>
<dbReference type="Proteomes" id="UP000001824">
    <property type="component" value="Chromosome"/>
</dbReference>
<dbReference type="GO" id="GO:0016597">
    <property type="term" value="F:amino acid binding"/>
    <property type="evidence" value="ECO:0007669"/>
    <property type="project" value="InterPro"/>
</dbReference>
<dbReference type="GO" id="GO:0004070">
    <property type="term" value="F:aspartate carbamoyltransferase activity"/>
    <property type="evidence" value="ECO:0007669"/>
    <property type="project" value="UniProtKB-UniRule"/>
</dbReference>
<dbReference type="GO" id="GO:0006207">
    <property type="term" value="P:'de novo' pyrimidine nucleobase biosynthetic process"/>
    <property type="evidence" value="ECO:0007669"/>
    <property type="project" value="InterPro"/>
</dbReference>
<dbReference type="GO" id="GO:0044205">
    <property type="term" value="P:'de novo' UMP biosynthetic process"/>
    <property type="evidence" value="ECO:0007669"/>
    <property type="project" value="UniProtKB-UniRule"/>
</dbReference>
<dbReference type="GO" id="GO:0006520">
    <property type="term" value="P:amino acid metabolic process"/>
    <property type="evidence" value="ECO:0007669"/>
    <property type="project" value="InterPro"/>
</dbReference>
<dbReference type="FunFam" id="3.40.50.1370:FF:000002">
    <property type="entry name" value="Aspartate carbamoyltransferase 2"/>
    <property type="match status" value="1"/>
</dbReference>
<dbReference type="Gene3D" id="3.40.50.1370">
    <property type="entry name" value="Aspartate/ornithine carbamoyltransferase"/>
    <property type="match status" value="2"/>
</dbReference>
<dbReference type="HAMAP" id="MF_00001">
    <property type="entry name" value="Asp_carb_tr"/>
    <property type="match status" value="1"/>
</dbReference>
<dbReference type="InterPro" id="IPR006132">
    <property type="entry name" value="Asp/Orn_carbamoyltranf_P-bd"/>
</dbReference>
<dbReference type="InterPro" id="IPR006130">
    <property type="entry name" value="Asp/Orn_carbamoylTrfase"/>
</dbReference>
<dbReference type="InterPro" id="IPR036901">
    <property type="entry name" value="Asp/Orn_carbamoylTrfase_sf"/>
</dbReference>
<dbReference type="InterPro" id="IPR002082">
    <property type="entry name" value="Asp_carbamoyltransf"/>
</dbReference>
<dbReference type="InterPro" id="IPR006131">
    <property type="entry name" value="Asp_carbamoyltransf_Asp/Orn-bd"/>
</dbReference>
<dbReference type="NCBIfam" id="TIGR00670">
    <property type="entry name" value="asp_carb_tr"/>
    <property type="match status" value="1"/>
</dbReference>
<dbReference type="NCBIfam" id="NF002032">
    <property type="entry name" value="PRK00856.1"/>
    <property type="match status" value="1"/>
</dbReference>
<dbReference type="PANTHER" id="PTHR45753:SF6">
    <property type="entry name" value="ASPARTATE CARBAMOYLTRANSFERASE"/>
    <property type="match status" value="1"/>
</dbReference>
<dbReference type="PANTHER" id="PTHR45753">
    <property type="entry name" value="ORNITHINE CARBAMOYLTRANSFERASE, MITOCHONDRIAL"/>
    <property type="match status" value="1"/>
</dbReference>
<dbReference type="Pfam" id="PF00185">
    <property type="entry name" value="OTCace"/>
    <property type="match status" value="1"/>
</dbReference>
<dbReference type="Pfam" id="PF02729">
    <property type="entry name" value="OTCace_N"/>
    <property type="match status" value="1"/>
</dbReference>
<dbReference type="PRINTS" id="PR00100">
    <property type="entry name" value="AOTCASE"/>
</dbReference>
<dbReference type="PRINTS" id="PR00101">
    <property type="entry name" value="ATCASE"/>
</dbReference>
<dbReference type="SUPFAM" id="SSF53671">
    <property type="entry name" value="Aspartate/ornithine carbamoyltransferase"/>
    <property type="match status" value="1"/>
</dbReference>
<dbReference type="PROSITE" id="PS00097">
    <property type="entry name" value="CARBAMOYLTRANSFERASE"/>
    <property type="match status" value="1"/>
</dbReference>
<keyword id="KW-0665">Pyrimidine biosynthesis</keyword>
<keyword id="KW-0808">Transferase</keyword>
<evidence type="ECO:0000255" key="1">
    <source>
        <dbReference type="HAMAP-Rule" id="MF_00001"/>
    </source>
</evidence>
<proteinExistence type="inferred from homology"/>
<organism>
    <name type="scientific">Clostridium perfringens (strain SM101 / Type A)</name>
    <dbReference type="NCBI Taxonomy" id="289380"/>
    <lineage>
        <taxon>Bacteria</taxon>
        <taxon>Bacillati</taxon>
        <taxon>Bacillota</taxon>
        <taxon>Clostridia</taxon>
        <taxon>Eubacteriales</taxon>
        <taxon>Clostridiaceae</taxon>
        <taxon>Clostridium</taxon>
    </lineage>
</organism>
<name>PYRB_CLOPS</name>